<dbReference type="EMBL" id="CP001019">
    <property type="protein sequence ID" value="ACJ18452.1"/>
    <property type="molecule type" value="Genomic_DNA"/>
</dbReference>
<dbReference type="RefSeq" id="WP_010957868.1">
    <property type="nucleotide sequence ID" value="NC_011527.1"/>
</dbReference>
<dbReference type="KEGG" id="cbg:CbuG_1114"/>
<dbReference type="HOGENOM" id="CLU_128688_0_0_6"/>
<dbReference type="GO" id="GO:0005886">
    <property type="term" value="C:plasma membrane"/>
    <property type="evidence" value="ECO:0007669"/>
    <property type="project" value="UniProtKB-SubCell"/>
</dbReference>
<dbReference type="GO" id="GO:0015035">
    <property type="term" value="F:protein-disulfide reductase activity"/>
    <property type="evidence" value="ECO:0007669"/>
    <property type="project" value="UniProtKB-UniRule"/>
</dbReference>
<dbReference type="GO" id="GO:0006457">
    <property type="term" value="P:protein folding"/>
    <property type="evidence" value="ECO:0007669"/>
    <property type="project" value="InterPro"/>
</dbReference>
<dbReference type="Gene3D" id="1.20.1550.10">
    <property type="entry name" value="DsbB-like"/>
    <property type="match status" value="1"/>
</dbReference>
<dbReference type="HAMAP" id="MF_00287">
    <property type="entry name" value="BdbC"/>
    <property type="match status" value="1"/>
</dbReference>
<dbReference type="InterPro" id="IPR003752">
    <property type="entry name" value="DiS_bond_form_DsbB/BdbC"/>
</dbReference>
<dbReference type="InterPro" id="IPR012187">
    <property type="entry name" value="Disulphide_bond_form_BdbC"/>
</dbReference>
<dbReference type="InterPro" id="IPR023380">
    <property type="entry name" value="DsbB-like_sf"/>
</dbReference>
<dbReference type="PANTHER" id="PTHR43469">
    <property type="entry name" value="DISULFIDE FORMATION PROTEIN-RELATED"/>
    <property type="match status" value="1"/>
</dbReference>
<dbReference type="PANTHER" id="PTHR43469:SF1">
    <property type="entry name" value="SPBETA PROPHAGE-DERIVED DISULFIDE BOND FORMATION PROTEIN B"/>
    <property type="match status" value="1"/>
</dbReference>
<dbReference type="Pfam" id="PF02600">
    <property type="entry name" value="DsbB"/>
    <property type="match status" value="1"/>
</dbReference>
<dbReference type="PIRSF" id="PIRSF036659">
    <property type="entry name" value="BdbC"/>
    <property type="match status" value="1"/>
</dbReference>
<dbReference type="SUPFAM" id="SSF158442">
    <property type="entry name" value="DsbB-like"/>
    <property type="match status" value="1"/>
</dbReference>
<feature type="chain" id="PRO_1000114970" description="Probable disulfide formation protein">
    <location>
        <begin position="1"/>
        <end position="147"/>
    </location>
</feature>
<feature type="transmembrane region" description="Helical" evidence="1">
    <location>
        <begin position="9"/>
        <end position="28"/>
    </location>
</feature>
<feature type="transmembrane region" description="Helical" evidence="1">
    <location>
        <begin position="43"/>
        <end position="62"/>
    </location>
</feature>
<feature type="transmembrane region" description="Helical" evidence="1">
    <location>
        <begin position="69"/>
        <end position="86"/>
    </location>
</feature>
<feature type="transmembrane region" description="Helical" evidence="1">
    <location>
        <begin position="115"/>
        <end position="138"/>
    </location>
</feature>
<feature type="disulfide bond" description="Redox-active" evidence="1">
    <location>
        <begin position="38"/>
        <end position="41"/>
    </location>
</feature>
<feature type="disulfide bond" description="Redox-active" evidence="1">
    <location>
        <begin position="99"/>
        <end position="106"/>
    </location>
</feature>
<evidence type="ECO:0000255" key="1">
    <source>
        <dbReference type="HAMAP-Rule" id="MF_00287"/>
    </source>
</evidence>
<reference key="1">
    <citation type="journal article" date="2009" name="Infect. Immun.">
        <title>Comparative genomics reveal extensive transposon-mediated genomic plasticity and diversity among potential effector proteins within the genus Coxiella.</title>
        <authorList>
            <person name="Beare P.A."/>
            <person name="Unsworth N."/>
            <person name="Andoh M."/>
            <person name="Voth D.E."/>
            <person name="Omsland A."/>
            <person name="Gilk S.D."/>
            <person name="Williams K.P."/>
            <person name="Sobral B.W."/>
            <person name="Kupko J.J. III"/>
            <person name="Porcella S.F."/>
            <person name="Samuel J.E."/>
            <person name="Heinzen R.A."/>
        </authorList>
    </citation>
    <scope>NUCLEOTIDE SEQUENCE [LARGE SCALE GENOMIC DNA]</scope>
    <source>
        <strain>CbuG_Q212</strain>
    </source>
</reference>
<gene>
    <name type="ordered locus">CbuG_1114</name>
</gene>
<organism>
    <name type="scientific">Coxiella burnetii (strain CbuG_Q212)</name>
    <name type="common">Coxiella burnetii (strain Q212)</name>
    <dbReference type="NCBI Taxonomy" id="434923"/>
    <lineage>
        <taxon>Bacteria</taxon>
        <taxon>Pseudomonadati</taxon>
        <taxon>Pseudomonadota</taxon>
        <taxon>Gammaproteobacteria</taxon>
        <taxon>Legionellales</taxon>
        <taxon>Coxiellaceae</taxon>
        <taxon>Coxiella</taxon>
    </lineage>
</organism>
<keyword id="KW-0997">Cell inner membrane</keyword>
<keyword id="KW-1003">Cell membrane</keyword>
<keyword id="KW-0143">Chaperone</keyword>
<keyword id="KW-1015">Disulfide bond</keyword>
<keyword id="KW-0249">Electron transport</keyword>
<keyword id="KW-0472">Membrane</keyword>
<keyword id="KW-0560">Oxidoreductase</keyword>
<keyword id="KW-0676">Redox-active center</keyword>
<keyword id="KW-0812">Transmembrane</keyword>
<keyword id="KW-1133">Transmembrane helix</keyword>
<keyword id="KW-0813">Transport</keyword>
<comment type="function">
    <text evidence="1">Required for disulfide bond formation in some proteins.</text>
</comment>
<comment type="subcellular location">
    <subcellularLocation>
        <location evidence="1">Cell inner membrane</location>
        <topology evidence="1">Multi-pass membrane protein</topology>
    </subcellularLocation>
</comment>
<comment type="similarity">
    <text evidence="1">Belongs to the DsbB family. BdbC subfamily.</text>
</comment>
<sequence>MMVSRLLKNYSLYFAWLTALIATLGSLYLSLVRHIPVCDLCWYQRVCIYPLTILLGIAAYRTDRGVVKYALPLVVLGFLFSVYQYLQQMIPGFAPINLCGSTSPHCSEIHWEIFGFITLPFLGMLATLIMSFFLIMAFYSLDKRLAN</sequence>
<name>BDBC_COXB2</name>
<accession>B6J0H4</accession>
<protein>
    <recommendedName>
        <fullName evidence="1">Probable disulfide formation protein</fullName>
    </recommendedName>
    <alternativeName>
        <fullName evidence="1">Disulfide oxidoreductase</fullName>
    </alternativeName>
    <alternativeName>
        <fullName evidence="1">Thiol-disulfide oxidoreductase</fullName>
    </alternativeName>
</protein>
<proteinExistence type="inferred from homology"/>